<keyword id="KW-1185">Reference proteome</keyword>
<evidence type="ECO:0000256" key="1">
    <source>
        <dbReference type="SAM" id="MobiDB-lite"/>
    </source>
</evidence>
<evidence type="ECO:0000305" key="2"/>
<organism>
    <name type="scientific">Mus musculus</name>
    <name type="common">Mouse</name>
    <dbReference type="NCBI Taxonomy" id="10090"/>
    <lineage>
        <taxon>Eukaryota</taxon>
        <taxon>Metazoa</taxon>
        <taxon>Chordata</taxon>
        <taxon>Craniata</taxon>
        <taxon>Vertebrata</taxon>
        <taxon>Euteleostomi</taxon>
        <taxon>Mammalia</taxon>
        <taxon>Eutheria</taxon>
        <taxon>Euarchontoglires</taxon>
        <taxon>Glires</taxon>
        <taxon>Rodentia</taxon>
        <taxon>Myomorpha</taxon>
        <taxon>Muroidea</taxon>
        <taxon>Muridae</taxon>
        <taxon>Murinae</taxon>
        <taxon>Mus</taxon>
        <taxon>Mus</taxon>
    </lineage>
</organism>
<name>CS081_MOUSE</name>
<proteinExistence type="evidence at transcript level"/>
<dbReference type="EMBL" id="AK005784">
    <property type="protein sequence ID" value="BAB24236.1"/>
    <property type="status" value="ALT_FRAME"/>
    <property type="molecule type" value="mRNA"/>
</dbReference>
<dbReference type="EMBL" id="AC152939">
    <property type="status" value="NOT_ANNOTATED_CDS"/>
    <property type="molecule type" value="Genomic_DNA"/>
</dbReference>
<dbReference type="CCDS" id="CCDS52230.1"/>
<dbReference type="RefSeq" id="NP_081325.1">
    <property type="nucleotide sequence ID" value="NM_027049.1"/>
</dbReference>
<dbReference type="FunCoup" id="D3Z070">
    <property type="interactions" value="1"/>
</dbReference>
<dbReference type="iPTMnet" id="D3Z070"/>
<dbReference type="PhosphoSitePlus" id="D3Z070"/>
<dbReference type="PaxDb" id="10090-ENSMUSP00000103566"/>
<dbReference type="Antibodypedia" id="71698">
    <property type="antibodies" value="4 antibodies from 4 providers"/>
</dbReference>
<dbReference type="Ensembl" id="ENSMUST00000107933.8">
    <property type="protein sequence ID" value="ENSMUSP00000103566.2"/>
    <property type="gene ID" value="ENSMUSG00000008028.16"/>
</dbReference>
<dbReference type="GeneID" id="69349"/>
<dbReference type="KEGG" id="mmu:69349"/>
<dbReference type="UCSC" id="uc009gpf.2">
    <property type="organism name" value="mouse"/>
</dbReference>
<dbReference type="AGR" id="MGI:1916599"/>
<dbReference type="MGI" id="MGI:1916599">
    <property type="gene designation" value="1700008O03Rik"/>
</dbReference>
<dbReference type="VEuPathDB" id="HostDB:ENSMUSG00000008028"/>
<dbReference type="eggNOG" id="ENOG502S8P9">
    <property type="taxonomic scope" value="Eukaryota"/>
</dbReference>
<dbReference type="GeneTree" id="ENSGT00530000064955"/>
<dbReference type="InParanoid" id="D3Z070"/>
<dbReference type="OMA" id="NPPEKEM"/>
<dbReference type="OrthoDB" id="6076093at2759"/>
<dbReference type="TreeFam" id="TF353595"/>
<dbReference type="BioGRID-ORCS" id="69349">
    <property type="hits" value="4 hits in 75 CRISPR screens"/>
</dbReference>
<dbReference type="PRO" id="PR:D3Z070"/>
<dbReference type="Proteomes" id="UP000000589">
    <property type="component" value="Chromosome 7"/>
</dbReference>
<dbReference type="RNAct" id="D3Z070">
    <property type="molecule type" value="protein"/>
</dbReference>
<dbReference type="Bgee" id="ENSMUSG00000008028">
    <property type="expression patterns" value="Expressed in seminiferous tubule of testis and 49 other cell types or tissues"/>
</dbReference>
<dbReference type="ExpressionAtlas" id="D3Z070">
    <property type="expression patterns" value="baseline and differential"/>
</dbReference>
<dbReference type="InterPro" id="IPR031746">
    <property type="entry name" value="DUF4732"/>
</dbReference>
<dbReference type="PANTHER" id="PTHR37153">
    <property type="entry name" value="CHROMOSOME 19 C19ORF81 HOMOLOG"/>
    <property type="match status" value="1"/>
</dbReference>
<dbReference type="PANTHER" id="PTHR37153:SF1">
    <property type="entry name" value="HYPOTHETICAL LOC292874"/>
    <property type="match status" value="1"/>
</dbReference>
<dbReference type="Pfam" id="PF15876">
    <property type="entry name" value="DUF4732"/>
    <property type="match status" value="1"/>
</dbReference>
<sequence>MQPEVEPLISPNLGAPGSHRETGSFLVDLESMEESMSRSLGKPAKSSKQYLRQVISEYEALDRELPCIRKFSEPPSAQPLCLCMETSEDFTHVEVLQALEAELPGAMESGRVNSIRYENMNVICGTAGRRDRWLITVTDFQTRSRLLRSGLTLRGTAYPLVRHDDLLLGDYRLHLRRSLVRRRMLEALGAEPADED</sequence>
<feature type="chain" id="PRO_0000413697" description="Putative uncharacterized protein C19orf81 homolog">
    <location>
        <begin position="1"/>
        <end position="196"/>
    </location>
</feature>
<feature type="region of interest" description="Disordered" evidence="1">
    <location>
        <begin position="1"/>
        <end position="21"/>
    </location>
</feature>
<comment type="sequence caution" evidence="2">
    <conflict type="frameshift">
        <sequence resource="EMBL-CDS" id="BAB24236"/>
    </conflict>
</comment>
<accession>D3Z070</accession>
<accession>Q9DAJ9</accession>
<protein>
    <recommendedName>
        <fullName>Putative uncharacterized protein C19orf81 homolog</fullName>
    </recommendedName>
</protein>
<reference key="1">
    <citation type="journal article" date="2005" name="Science">
        <title>The transcriptional landscape of the mammalian genome.</title>
        <authorList>
            <person name="Carninci P."/>
            <person name="Kasukawa T."/>
            <person name="Katayama S."/>
            <person name="Gough J."/>
            <person name="Frith M.C."/>
            <person name="Maeda N."/>
            <person name="Oyama R."/>
            <person name="Ravasi T."/>
            <person name="Lenhard B."/>
            <person name="Wells C."/>
            <person name="Kodzius R."/>
            <person name="Shimokawa K."/>
            <person name="Bajic V.B."/>
            <person name="Brenner S.E."/>
            <person name="Batalov S."/>
            <person name="Forrest A.R."/>
            <person name="Zavolan M."/>
            <person name="Davis M.J."/>
            <person name="Wilming L.G."/>
            <person name="Aidinis V."/>
            <person name="Allen J.E."/>
            <person name="Ambesi-Impiombato A."/>
            <person name="Apweiler R."/>
            <person name="Aturaliya R.N."/>
            <person name="Bailey T.L."/>
            <person name="Bansal M."/>
            <person name="Baxter L."/>
            <person name="Beisel K.W."/>
            <person name="Bersano T."/>
            <person name="Bono H."/>
            <person name="Chalk A.M."/>
            <person name="Chiu K.P."/>
            <person name="Choudhary V."/>
            <person name="Christoffels A."/>
            <person name="Clutterbuck D.R."/>
            <person name="Crowe M.L."/>
            <person name="Dalla E."/>
            <person name="Dalrymple B.P."/>
            <person name="de Bono B."/>
            <person name="Della Gatta G."/>
            <person name="di Bernardo D."/>
            <person name="Down T."/>
            <person name="Engstrom P."/>
            <person name="Fagiolini M."/>
            <person name="Faulkner G."/>
            <person name="Fletcher C.F."/>
            <person name="Fukushima T."/>
            <person name="Furuno M."/>
            <person name="Futaki S."/>
            <person name="Gariboldi M."/>
            <person name="Georgii-Hemming P."/>
            <person name="Gingeras T.R."/>
            <person name="Gojobori T."/>
            <person name="Green R.E."/>
            <person name="Gustincich S."/>
            <person name="Harbers M."/>
            <person name="Hayashi Y."/>
            <person name="Hensch T.K."/>
            <person name="Hirokawa N."/>
            <person name="Hill D."/>
            <person name="Huminiecki L."/>
            <person name="Iacono M."/>
            <person name="Ikeo K."/>
            <person name="Iwama A."/>
            <person name="Ishikawa T."/>
            <person name="Jakt M."/>
            <person name="Kanapin A."/>
            <person name="Katoh M."/>
            <person name="Kawasawa Y."/>
            <person name="Kelso J."/>
            <person name="Kitamura H."/>
            <person name="Kitano H."/>
            <person name="Kollias G."/>
            <person name="Krishnan S.P."/>
            <person name="Kruger A."/>
            <person name="Kummerfeld S.K."/>
            <person name="Kurochkin I.V."/>
            <person name="Lareau L.F."/>
            <person name="Lazarevic D."/>
            <person name="Lipovich L."/>
            <person name="Liu J."/>
            <person name="Liuni S."/>
            <person name="McWilliam S."/>
            <person name="Madan Babu M."/>
            <person name="Madera M."/>
            <person name="Marchionni L."/>
            <person name="Matsuda H."/>
            <person name="Matsuzawa S."/>
            <person name="Miki H."/>
            <person name="Mignone F."/>
            <person name="Miyake S."/>
            <person name="Morris K."/>
            <person name="Mottagui-Tabar S."/>
            <person name="Mulder N."/>
            <person name="Nakano N."/>
            <person name="Nakauchi H."/>
            <person name="Ng P."/>
            <person name="Nilsson R."/>
            <person name="Nishiguchi S."/>
            <person name="Nishikawa S."/>
            <person name="Nori F."/>
            <person name="Ohara O."/>
            <person name="Okazaki Y."/>
            <person name="Orlando V."/>
            <person name="Pang K.C."/>
            <person name="Pavan W.J."/>
            <person name="Pavesi G."/>
            <person name="Pesole G."/>
            <person name="Petrovsky N."/>
            <person name="Piazza S."/>
            <person name="Reed J."/>
            <person name="Reid J.F."/>
            <person name="Ring B.Z."/>
            <person name="Ringwald M."/>
            <person name="Rost B."/>
            <person name="Ruan Y."/>
            <person name="Salzberg S.L."/>
            <person name="Sandelin A."/>
            <person name="Schneider C."/>
            <person name="Schoenbach C."/>
            <person name="Sekiguchi K."/>
            <person name="Semple C.A."/>
            <person name="Seno S."/>
            <person name="Sessa L."/>
            <person name="Sheng Y."/>
            <person name="Shibata Y."/>
            <person name="Shimada H."/>
            <person name="Shimada K."/>
            <person name="Silva D."/>
            <person name="Sinclair B."/>
            <person name="Sperling S."/>
            <person name="Stupka E."/>
            <person name="Sugiura K."/>
            <person name="Sultana R."/>
            <person name="Takenaka Y."/>
            <person name="Taki K."/>
            <person name="Tammoja K."/>
            <person name="Tan S.L."/>
            <person name="Tang S."/>
            <person name="Taylor M.S."/>
            <person name="Tegner J."/>
            <person name="Teichmann S.A."/>
            <person name="Ueda H.R."/>
            <person name="van Nimwegen E."/>
            <person name="Verardo R."/>
            <person name="Wei C.L."/>
            <person name="Yagi K."/>
            <person name="Yamanishi H."/>
            <person name="Zabarovsky E."/>
            <person name="Zhu S."/>
            <person name="Zimmer A."/>
            <person name="Hide W."/>
            <person name="Bult C."/>
            <person name="Grimmond S.M."/>
            <person name="Teasdale R.D."/>
            <person name="Liu E.T."/>
            <person name="Brusic V."/>
            <person name="Quackenbush J."/>
            <person name="Wahlestedt C."/>
            <person name="Mattick J.S."/>
            <person name="Hume D.A."/>
            <person name="Kai C."/>
            <person name="Sasaki D."/>
            <person name="Tomaru Y."/>
            <person name="Fukuda S."/>
            <person name="Kanamori-Katayama M."/>
            <person name="Suzuki M."/>
            <person name="Aoki J."/>
            <person name="Arakawa T."/>
            <person name="Iida J."/>
            <person name="Imamura K."/>
            <person name="Itoh M."/>
            <person name="Kato T."/>
            <person name="Kawaji H."/>
            <person name="Kawagashira N."/>
            <person name="Kawashima T."/>
            <person name="Kojima M."/>
            <person name="Kondo S."/>
            <person name="Konno H."/>
            <person name="Nakano K."/>
            <person name="Ninomiya N."/>
            <person name="Nishio T."/>
            <person name="Okada M."/>
            <person name="Plessy C."/>
            <person name="Shibata K."/>
            <person name="Shiraki T."/>
            <person name="Suzuki S."/>
            <person name="Tagami M."/>
            <person name="Waki K."/>
            <person name="Watahiki A."/>
            <person name="Okamura-Oho Y."/>
            <person name="Suzuki H."/>
            <person name="Kawai J."/>
            <person name="Hayashizaki Y."/>
        </authorList>
    </citation>
    <scope>NUCLEOTIDE SEQUENCE [LARGE SCALE MRNA]</scope>
    <source>
        <strain>C57BL/6J</strain>
        <tissue>Testis</tissue>
    </source>
</reference>
<reference key="2">
    <citation type="journal article" date="2009" name="PLoS Biol.">
        <title>Lineage-specific biology revealed by a finished genome assembly of the mouse.</title>
        <authorList>
            <person name="Church D.M."/>
            <person name="Goodstadt L."/>
            <person name="Hillier L.W."/>
            <person name="Zody M.C."/>
            <person name="Goldstein S."/>
            <person name="She X."/>
            <person name="Bult C.J."/>
            <person name="Agarwala R."/>
            <person name="Cherry J.L."/>
            <person name="DiCuccio M."/>
            <person name="Hlavina W."/>
            <person name="Kapustin Y."/>
            <person name="Meric P."/>
            <person name="Maglott D."/>
            <person name="Birtle Z."/>
            <person name="Marques A.C."/>
            <person name="Graves T."/>
            <person name="Zhou S."/>
            <person name="Teague B."/>
            <person name="Potamousis K."/>
            <person name="Churas C."/>
            <person name="Place M."/>
            <person name="Herschleb J."/>
            <person name="Runnheim R."/>
            <person name="Forrest D."/>
            <person name="Amos-Landgraf J."/>
            <person name="Schwartz D.C."/>
            <person name="Cheng Z."/>
            <person name="Lindblad-Toh K."/>
            <person name="Eichler E.E."/>
            <person name="Ponting C.P."/>
        </authorList>
    </citation>
    <scope>NUCLEOTIDE SEQUENCE [LARGE SCALE GENOMIC DNA]</scope>
    <source>
        <strain>C57BL/6J</strain>
    </source>
</reference>